<reference key="1">
    <citation type="journal article" date="2007" name="Genome Res.">
        <title>Reductive evolution and niche adaptation inferred from the genome of Mycobacterium ulcerans, the causative agent of Buruli ulcer.</title>
        <authorList>
            <person name="Stinear T.P."/>
            <person name="Seemann T."/>
            <person name="Pidot S."/>
            <person name="Frigui W."/>
            <person name="Reysset G."/>
            <person name="Garnier T."/>
            <person name="Meurice G."/>
            <person name="Simon D."/>
            <person name="Bouchier C."/>
            <person name="Ma L."/>
            <person name="Tichit M."/>
            <person name="Porter J.L."/>
            <person name="Ryan J."/>
            <person name="Johnson P.D.R."/>
            <person name="Davies J.K."/>
            <person name="Jenkin G.A."/>
            <person name="Small P.L.C."/>
            <person name="Jones L.M."/>
            <person name="Tekaia F."/>
            <person name="Laval F."/>
            <person name="Daffe M."/>
            <person name="Parkhill J."/>
            <person name="Cole S.T."/>
        </authorList>
    </citation>
    <scope>NUCLEOTIDE SEQUENCE [LARGE SCALE GENOMIC DNA]</scope>
    <source>
        <strain>Agy99</strain>
    </source>
</reference>
<comment type="function">
    <text evidence="1">Reversibly catalyzes the transfer of the carbamoyl group from carbamoyl phosphate (CP) to the N(epsilon) atom of ornithine (ORN) to produce L-citrulline.</text>
</comment>
<comment type="catalytic activity">
    <reaction evidence="2">
        <text>carbamoyl phosphate + L-ornithine = L-citrulline + phosphate + H(+)</text>
        <dbReference type="Rhea" id="RHEA:19513"/>
        <dbReference type="ChEBI" id="CHEBI:15378"/>
        <dbReference type="ChEBI" id="CHEBI:43474"/>
        <dbReference type="ChEBI" id="CHEBI:46911"/>
        <dbReference type="ChEBI" id="CHEBI:57743"/>
        <dbReference type="ChEBI" id="CHEBI:58228"/>
        <dbReference type="EC" id="2.1.3.3"/>
    </reaction>
</comment>
<comment type="pathway">
    <text evidence="2">Amino-acid biosynthesis; L-arginine biosynthesis; L-arginine from L-ornithine and carbamoyl phosphate: step 1/3.</text>
</comment>
<comment type="subcellular location">
    <subcellularLocation>
        <location evidence="2">Cytoplasm</location>
    </subcellularLocation>
</comment>
<comment type="similarity">
    <text evidence="2">Belongs to the aspartate/ornithine carbamoyltransferase superfamily. OTCase family.</text>
</comment>
<gene>
    <name evidence="2" type="primary">argF</name>
    <name type="ordered locus">MUL_1648</name>
</gene>
<feature type="chain" id="PRO_1000065105" description="Ornithine carbamoyltransferase">
    <location>
        <begin position="1"/>
        <end position="308"/>
    </location>
</feature>
<feature type="binding site" evidence="2">
    <location>
        <begin position="50"/>
        <end position="53"/>
    </location>
    <ligand>
        <name>carbamoyl phosphate</name>
        <dbReference type="ChEBI" id="CHEBI:58228"/>
    </ligand>
</feature>
<feature type="binding site" evidence="2">
    <location>
        <position position="77"/>
    </location>
    <ligand>
        <name>carbamoyl phosphate</name>
        <dbReference type="ChEBI" id="CHEBI:58228"/>
    </ligand>
</feature>
<feature type="binding site" evidence="2">
    <location>
        <position position="101"/>
    </location>
    <ligand>
        <name>carbamoyl phosphate</name>
        <dbReference type="ChEBI" id="CHEBI:58228"/>
    </ligand>
</feature>
<feature type="binding site" evidence="2">
    <location>
        <begin position="128"/>
        <end position="131"/>
    </location>
    <ligand>
        <name>carbamoyl phosphate</name>
        <dbReference type="ChEBI" id="CHEBI:58228"/>
    </ligand>
</feature>
<feature type="binding site" evidence="2">
    <location>
        <position position="160"/>
    </location>
    <ligand>
        <name>L-ornithine</name>
        <dbReference type="ChEBI" id="CHEBI:46911"/>
    </ligand>
</feature>
<feature type="binding site" evidence="2">
    <location>
        <position position="224"/>
    </location>
    <ligand>
        <name>L-ornithine</name>
        <dbReference type="ChEBI" id="CHEBI:46911"/>
    </ligand>
</feature>
<feature type="binding site" evidence="2">
    <location>
        <begin position="228"/>
        <end position="229"/>
    </location>
    <ligand>
        <name>L-ornithine</name>
        <dbReference type="ChEBI" id="CHEBI:46911"/>
    </ligand>
</feature>
<feature type="binding site" evidence="2">
    <location>
        <begin position="264"/>
        <end position="265"/>
    </location>
    <ligand>
        <name>carbamoyl phosphate</name>
        <dbReference type="ChEBI" id="CHEBI:58228"/>
    </ligand>
</feature>
<feature type="binding site" evidence="2">
    <location>
        <position position="292"/>
    </location>
    <ligand>
        <name>carbamoyl phosphate</name>
        <dbReference type="ChEBI" id="CHEBI:58228"/>
    </ligand>
</feature>
<accession>A0PP77</accession>
<sequence>MIRHFLRDDDLSPTEQAEVLQLAAELKREPFSRRPLDGPRGVAVIFDKNSTRTRFSFEMGIAQLGGHAVVVDGRSTQLGREETLPDTAKVLSRFVDAIVWRTFGQDRLQAMASTATVPVVNALSDEFHPCQVLADLQTITERRGSLKGLRLSYFGDGANNMAHSLMLGGVTAGMHVTIAAPDGFHPDPSVVGAAEQRAETTGASVRLTADAHVAAAGADVLVTDTWTSMGQEDDGLDRVKPFRPFQVNEQLLAAADSEVVVLHCLPAHRGDEITDQVMDGPASAVWDEAENRLHAQKALLVWLLERGR</sequence>
<name>OTC_MYCUA</name>
<keyword id="KW-0028">Amino-acid biosynthesis</keyword>
<keyword id="KW-0055">Arginine biosynthesis</keyword>
<keyword id="KW-0963">Cytoplasm</keyword>
<keyword id="KW-0808">Transferase</keyword>
<organism>
    <name type="scientific">Mycobacterium ulcerans (strain Agy99)</name>
    <dbReference type="NCBI Taxonomy" id="362242"/>
    <lineage>
        <taxon>Bacteria</taxon>
        <taxon>Bacillati</taxon>
        <taxon>Actinomycetota</taxon>
        <taxon>Actinomycetes</taxon>
        <taxon>Mycobacteriales</taxon>
        <taxon>Mycobacteriaceae</taxon>
        <taxon>Mycobacterium</taxon>
        <taxon>Mycobacterium ulcerans group</taxon>
    </lineage>
</organism>
<protein>
    <recommendedName>
        <fullName evidence="2">Ornithine carbamoyltransferase</fullName>
        <shortName evidence="2">OTCase</shortName>
        <ecNumber evidence="2">2.1.3.3</ecNumber>
    </recommendedName>
</protein>
<dbReference type="EC" id="2.1.3.3" evidence="2"/>
<dbReference type="EMBL" id="CP000325">
    <property type="protein sequence ID" value="ABL04146.1"/>
    <property type="molecule type" value="Genomic_DNA"/>
</dbReference>
<dbReference type="RefSeq" id="WP_011739766.1">
    <property type="nucleotide sequence ID" value="NC_008611.1"/>
</dbReference>
<dbReference type="SMR" id="A0PP77"/>
<dbReference type="KEGG" id="mul:MUL_1648"/>
<dbReference type="eggNOG" id="COG0078">
    <property type="taxonomic scope" value="Bacteria"/>
</dbReference>
<dbReference type="HOGENOM" id="CLU_043846_3_2_11"/>
<dbReference type="UniPathway" id="UPA00068">
    <property type="reaction ID" value="UER00112"/>
</dbReference>
<dbReference type="Proteomes" id="UP000000765">
    <property type="component" value="Chromosome"/>
</dbReference>
<dbReference type="GO" id="GO:0005737">
    <property type="term" value="C:cytoplasm"/>
    <property type="evidence" value="ECO:0007669"/>
    <property type="project" value="UniProtKB-SubCell"/>
</dbReference>
<dbReference type="GO" id="GO:0016597">
    <property type="term" value="F:amino acid binding"/>
    <property type="evidence" value="ECO:0007669"/>
    <property type="project" value="InterPro"/>
</dbReference>
<dbReference type="GO" id="GO:0004585">
    <property type="term" value="F:ornithine carbamoyltransferase activity"/>
    <property type="evidence" value="ECO:0007669"/>
    <property type="project" value="UniProtKB-UniRule"/>
</dbReference>
<dbReference type="GO" id="GO:0042450">
    <property type="term" value="P:arginine biosynthetic process via ornithine"/>
    <property type="evidence" value="ECO:0007669"/>
    <property type="project" value="TreeGrafter"/>
</dbReference>
<dbReference type="GO" id="GO:0019240">
    <property type="term" value="P:citrulline biosynthetic process"/>
    <property type="evidence" value="ECO:0007669"/>
    <property type="project" value="TreeGrafter"/>
</dbReference>
<dbReference type="GO" id="GO:0006526">
    <property type="term" value="P:L-arginine biosynthetic process"/>
    <property type="evidence" value="ECO:0007669"/>
    <property type="project" value="UniProtKB-UniRule"/>
</dbReference>
<dbReference type="FunFam" id="3.40.50.1370:FF:000008">
    <property type="entry name" value="Ornithine carbamoyltransferase"/>
    <property type="match status" value="1"/>
</dbReference>
<dbReference type="Gene3D" id="3.40.50.1370">
    <property type="entry name" value="Aspartate/ornithine carbamoyltransferase"/>
    <property type="match status" value="2"/>
</dbReference>
<dbReference type="HAMAP" id="MF_01109">
    <property type="entry name" value="OTCase"/>
    <property type="match status" value="1"/>
</dbReference>
<dbReference type="InterPro" id="IPR006132">
    <property type="entry name" value="Asp/Orn_carbamoyltranf_P-bd"/>
</dbReference>
<dbReference type="InterPro" id="IPR006130">
    <property type="entry name" value="Asp/Orn_carbamoylTrfase"/>
</dbReference>
<dbReference type="InterPro" id="IPR036901">
    <property type="entry name" value="Asp/Orn_carbamoylTrfase_sf"/>
</dbReference>
<dbReference type="InterPro" id="IPR006131">
    <property type="entry name" value="Asp_carbamoyltransf_Asp/Orn-bd"/>
</dbReference>
<dbReference type="InterPro" id="IPR002292">
    <property type="entry name" value="Orn/put_carbamltrans"/>
</dbReference>
<dbReference type="InterPro" id="IPR024904">
    <property type="entry name" value="OTCase_ArgI"/>
</dbReference>
<dbReference type="NCBIfam" id="TIGR00658">
    <property type="entry name" value="orni_carb_tr"/>
    <property type="match status" value="1"/>
</dbReference>
<dbReference type="NCBIfam" id="NF001986">
    <property type="entry name" value="PRK00779.1"/>
    <property type="match status" value="1"/>
</dbReference>
<dbReference type="PANTHER" id="PTHR45753">
    <property type="entry name" value="ORNITHINE CARBAMOYLTRANSFERASE, MITOCHONDRIAL"/>
    <property type="match status" value="1"/>
</dbReference>
<dbReference type="PANTHER" id="PTHR45753:SF3">
    <property type="entry name" value="ORNITHINE TRANSCARBAMYLASE, MITOCHONDRIAL"/>
    <property type="match status" value="1"/>
</dbReference>
<dbReference type="Pfam" id="PF00185">
    <property type="entry name" value="OTCace"/>
    <property type="match status" value="1"/>
</dbReference>
<dbReference type="Pfam" id="PF02729">
    <property type="entry name" value="OTCace_N"/>
    <property type="match status" value="1"/>
</dbReference>
<dbReference type="PRINTS" id="PR00100">
    <property type="entry name" value="AOTCASE"/>
</dbReference>
<dbReference type="PRINTS" id="PR00102">
    <property type="entry name" value="OTCASE"/>
</dbReference>
<dbReference type="SUPFAM" id="SSF53671">
    <property type="entry name" value="Aspartate/ornithine carbamoyltransferase"/>
    <property type="match status" value="1"/>
</dbReference>
<dbReference type="PROSITE" id="PS00097">
    <property type="entry name" value="CARBAMOYLTRANSFERASE"/>
    <property type="match status" value="1"/>
</dbReference>
<proteinExistence type="inferred from homology"/>
<evidence type="ECO:0000250" key="1"/>
<evidence type="ECO:0000255" key="2">
    <source>
        <dbReference type="HAMAP-Rule" id="MF_01109"/>
    </source>
</evidence>